<accession>A9AI62</accession>
<keyword id="KW-1185">Reference proteome</keyword>
<keyword id="KW-0687">Ribonucleoprotein</keyword>
<keyword id="KW-0689">Ribosomal protein</keyword>
<keyword id="KW-0694">RNA-binding</keyword>
<keyword id="KW-0699">rRNA-binding</keyword>
<evidence type="ECO:0000255" key="1">
    <source>
        <dbReference type="HAMAP-Rule" id="MF_01363"/>
    </source>
</evidence>
<evidence type="ECO:0000305" key="2"/>
<name>RL21_BURM1</name>
<reference key="1">
    <citation type="submission" date="2007-10" db="EMBL/GenBank/DDBJ databases">
        <title>Complete sequence of chromosome 1 of Burkholderia multivorans ATCC 17616.</title>
        <authorList>
            <person name="Copeland A."/>
            <person name="Lucas S."/>
            <person name="Lapidus A."/>
            <person name="Barry K."/>
            <person name="Glavina del Rio T."/>
            <person name="Dalin E."/>
            <person name="Tice H."/>
            <person name="Pitluck S."/>
            <person name="Chain P."/>
            <person name="Malfatti S."/>
            <person name="Shin M."/>
            <person name="Vergez L."/>
            <person name="Schmutz J."/>
            <person name="Larimer F."/>
            <person name="Land M."/>
            <person name="Hauser L."/>
            <person name="Kyrpides N."/>
            <person name="Kim E."/>
            <person name="Tiedje J."/>
            <person name="Richardson P."/>
        </authorList>
    </citation>
    <scope>NUCLEOTIDE SEQUENCE [LARGE SCALE GENOMIC DNA]</scope>
    <source>
        <strain>ATCC 17616 / 249</strain>
    </source>
</reference>
<reference key="2">
    <citation type="submission" date="2007-04" db="EMBL/GenBank/DDBJ databases">
        <title>Complete genome sequence of Burkholderia multivorans ATCC 17616.</title>
        <authorList>
            <person name="Ohtsubo Y."/>
            <person name="Yamashita A."/>
            <person name="Kurokawa K."/>
            <person name="Takami H."/>
            <person name="Yuhara S."/>
            <person name="Nishiyama E."/>
            <person name="Endo R."/>
            <person name="Miyazaki R."/>
            <person name="Ono A."/>
            <person name="Yano K."/>
            <person name="Ito M."/>
            <person name="Sota M."/>
            <person name="Yuji N."/>
            <person name="Hattori M."/>
            <person name="Tsuda M."/>
        </authorList>
    </citation>
    <scope>NUCLEOTIDE SEQUENCE [LARGE SCALE GENOMIC DNA]</scope>
    <source>
        <strain>ATCC 17616 / 249</strain>
    </source>
</reference>
<protein>
    <recommendedName>
        <fullName evidence="1">Large ribosomal subunit protein bL21</fullName>
    </recommendedName>
    <alternativeName>
        <fullName evidence="2">50S ribosomal protein L21</fullName>
    </alternativeName>
</protein>
<feature type="chain" id="PRO_1000143766" description="Large ribosomal subunit protein bL21">
    <location>
        <begin position="1"/>
        <end position="103"/>
    </location>
</feature>
<comment type="function">
    <text evidence="1">This protein binds to 23S rRNA in the presence of protein L20.</text>
</comment>
<comment type="subunit">
    <text evidence="1">Part of the 50S ribosomal subunit. Contacts protein L20.</text>
</comment>
<comment type="similarity">
    <text evidence="1">Belongs to the bacterial ribosomal protein bL21 family.</text>
</comment>
<gene>
    <name evidence="1" type="primary">rplU</name>
    <name type="ordered locus">Bmul_2802</name>
    <name type="ordered locus">BMULJ_00435</name>
</gene>
<proteinExistence type="inferred from homology"/>
<organism>
    <name type="scientific">Burkholderia multivorans (strain ATCC 17616 / 249)</name>
    <dbReference type="NCBI Taxonomy" id="395019"/>
    <lineage>
        <taxon>Bacteria</taxon>
        <taxon>Pseudomonadati</taxon>
        <taxon>Pseudomonadota</taxon>
        <taxon>Betaproteobacteria</taxon>
        <taxon>Burkholderiales</taxon>
        <taxon>Burkholderiaceae</taxon>
        <taxon>Burkholderia</taxon>
        <taxon>Burkholderia cepacia complex</taxon>
    </lineage>
</organism>
<dbReference type="EMBL" id="CP000868">
    <property type="protein sequence ID" value="ABX16486.1"/>
    <property type="molecule type" value="Genomic_DNA"/>
</dbReference>
<dbReference type="EMBL" id="AP009385">
    <property type="protein sequence ID" value="BAG42402.1"/>
    <property type="molecule type" value="Genomic_DNA"/>
</dbReference>
<dbReference type="RefSeq" id="WP_006025184.1">
    <property type="nucleotide sequence ID" value="NC_010804.1"/>
</dbReference>
<dbReference type="SMR" id="A9AI62"/>
<dbReference type="STRING" id="395019.BMULJ_00435"/>
<dbReference type="GeneID" id="98106574"/>
<dbReference type="KEGG" id="bmj:BMULJ_00435"/>
<dbReference type="KEGG" id="bmu:Bmul_2802"/>
<dbReference type="eggNOG" id="COG0261">
    <property type="taxonomic scope" value="Bacteria"/>
</dbReference>
<dbReference type="HOGENOM" id="CLU_061463_3_1_4"/>
<dbReference type="Proteomes" id="UP000008815">
    <property type="component" value="Chromosome 1"/>
</dbReference>
<dbReference type="GO" id="GO:0005737">
    <property type="term" value="C:cytoplasm"/>
    <property type="evidence" value="ECO:0007669"/>
    <property type="project" value="UniProtKB-ARBA"/>
</dbReference>
<dbReference type="GO" id="GO:1990904">
    <property type="term" value="C:ribonucleoprotein complex"/>
    <property type="evidence" value="ECO:0007669"/>
    <property type="project" value="UniProtKB-KW"/>
</dbReference>
<dbReference type="GO" id="GO:0005840">
    <property type="term" value="C:ribosome"/>
    <property type="evidence" value="ECO:0007669"/>
    <property type="project" value="UniProtKB-KW"/>
</dbReference>
<dbReference type="GO" id="GO:0019843">
    <property type="term" value="F:rRNA binding"/>
    <property type="evidence" value="ECO:0007669"/>
    <property type="project" value="UniProtKB-UniRule"/>
</dbReference>
<dbReference type="GO" id="GO:0003735">
    <property type="term" value="F:structural constituent of ribosome"/>
    <property type="evidence" value="ECO:0007669"/>
    <property type="project" value="InterPro"/>
</dbReference>
<dbReference type="GO" id="GO:0006412">
    <property type="term" value="P:translation"/>
    <property type="evidence" value="ECO:0007669"/>
    <property type="project" value="UniProtKB-UniRule"/>
</dbReference>
<dbReference type="HAMAP" id="MF_01363">
    <property type="entry name" value="Ribosomal_bL21"/>
    <property type="match status" value="1"/>
</dbReference>
<dbReference type="InterPro" id="IPR028909">
    <property type="entry name" value="bL21-like"/>
</dbReference>
<dbReference type="InterPro" id="IPR036164">
    <property type="entry name" value="bL21-like_sf"/>
</dbReference>
<dbReference type="InterPro" id="IPR001787">
    <property type="entry name" value="Ribosomal_bL21"/>
</dbReference>
<dbReference type="InterPro" id="IPR018258">
    <property type="entry name" value="Ribosomal_bL21_CS"/>
</dbReference>
<dbReference type="NCBIfam" id="TIGR00061">
    <property type="entry name" value="L21"/>
    <property type="match status" value="1"/>
</dbReference>
<dbReference type="PANTHER" id="PTHR21349">
    <property type="entry name" value="50S RIBOSOMAL PROTEIN L21"/>
    <property type="match status" value="1"/>
</dbReference>
<dbReference type="PANTHER" id="PTHR21349:SF0">
    <property type="entry name" value="LARGE RIBOSOMAL SUBUNIT PROTEIN BL21M"/>
    <property type="match status" value="1"/>
</dbReference>
<dbReference type="Pfam" id="PF00829">
    <property type="entry name" value="Ribosomal_L21p"/>
    <property type="match status" value="1"/>
</dbReference>
<dbReference type="SUPFAM" id="SSF141091">
    <property type="entry name" value="L21p-like"/>
    <property type="match status" value="1"/>
</dbReference>
<dbReference type="PROSITE" id="PS01169">
    <property type="entry name" value="RIBOSOMAL_L21"/>
    <property type="match status" value="1"/>
</dbReference>
<sequence length="103" mass="11356">MYAVIKTGGKQYKVAVGEKLKVEQIPADIDAEITLDQVLAVGEGESIKFGTPLVSGASVKATVVSHGRHAKVTIFKMRRRKHYQKHGGHRQNYTELRIDAINA</sequence>